<keyword id="KW-0030">Aminoacyl-tRNA synthetase</keyword>
<keyword id="KW-0067">ATP-binding</keyword>
<keyword id="KW-0963">Cytoplasm</keyword>
<keyword id="KW-0436">Ligase</keyword>
<keyword id="KW-0547">Nucleotide-binding</keyword>
<keyword id="KW-0648">Protein biosynthesis</keyword>
<name>SYGB_COXBR</name>
<feature type="chain" id="PRO_1000078540" description="Glycine--tRNA ligase beta subunit">
    <location>
        <begin position="1"/>
        <end position="689"/>
    </location>
</feature>
<accession>A9NB99</accession>
<sequence length="689" mass="77975">MTTQDFLLEIGCEELPPRRLNQLSQALSQTIKSELEKADLSFENIHRYATPRRLAVLVNNLALQQPQRKIERQGPSVKAAFDKDQTPTLACFGFAQSCGVSTAQLKVKKTKKGEFIYCEIEQPGQNTLDLLPNIIQSALKQLPTPKAMRWGDHKEFFVRPVHWIILMLGKDLVPATLLGKMASCETRGHRFHHPKNILVTKPDDYQKLLLTHGMVIADFEKRREKIRDLIQKAASEKGEAIIDEGLLEEVTGMVEWPVILVGNFKAEFLELPPEVLITTMKVHQRTFPIKNKNGDLLPYFIIVSNIESKNPKRVIVGNERVINARLADASFFYDNDLRTSLENRLPKLGDVIFQRQLGTLADKARRIEKLAAFIAKQINIDEQLAARAGLLSKCDLVSEMVYEFPTLQGIMGYYYAFHDKEPPLVAEAIKEHYLPRFSGDQLPRNLLSPCVAVADRIDTIIGIIGINKSPTGDKDPFALRRAALGILRILIEKELSLDLFALLNEAKNNYAVELPNVNVVNQSFDFIIERLRAWYLEKEVPASVFMAVLASHPDDPLDFDRRIKAVQHFQTLPEADALAAANKRVSNILKKQAAELKSKTIDHSLFDSDAEHLLADQLKERAELVNNLYKKADYTKALSELASLKEPIDIFFDKVMVMVDDKEKRENRLALLSSLQQLFSQIADISLLS</sequence>
<evidence type="ECO:0000255" key="1">
    <source>
        <dbReference type="HAMAP-Rule" id="MF_00255"/>
    </source>
</evidence>
<protein>
    <recommendedName>
        <fullName evidence="1">Glycine--tRNA ligase beta subunit</fullName>
        <ecNumber evidence="1">6.1.1.14</ecNumber>
    </recommendedName>
    <alternativeName>
        <fullName evidence="1">Glycyl-tRNA synthetase beta subunit</fullName>
        <shortName evidence="1">GlyRS</shortName>
    </alternativeName>
</protein>
<comment type="catalytic activity">
    <reaction evidence="1">
        <text>tRNA(Gly) + glycine + ATP = glycyl-tRNA(Gly) + AMP + diphosphate</text>
        <dbReference type="Rhea" id="RHEA:16013"/>
        <dbReference type="Rhea" id="RHEA-COMP:9664"/>
        <dbReference type="Rhea" id="RHEA-COMP:9683"/>
        <dbReference type="ChEBI" id="CHEBI:30616"/>
        <dbReference type="ChEBI" id="CHEBI:33019"/>
        <dbReference type="ChEBI" id="CHEBI:57305"/>
        <dbReference type="ChEBI" id="CHEBI:78442"/>
        <dbReference type="ChEBI" id="CHEBI:78522"/>
        <dbReference type="ChEBI" id="CHEBI:456215"/>
        <dbReference type="EC" id="6.1.1.14"/>
    </reaction>
</comment>
<comment type="subunit">
    <text evidence="1">Tetramer of two alpha and two beta subunits.</text>
</comment>
<comment type="subcellular location">
    <subcellularLocation>
        <location evidence="1">Cytoplasm</location>
    </subcellularLocation>
</comment>
<comment type="similarity">
    <text evidence="1">Belongs to the class-II aminoacyl-tRNA synthetase family.</text>
</comment>
<gene>
    <name evidence="1" type="primary">glyS</name>
    <name type="ordered locus">COXBURSA331_A2116</name>
</gene>
<organism>
    <name type="scientific">Coxiella burnetii (strain RSA 331 / Henzerling II)</name>
    <dbReference type="NCBI Taxonomy" id="360115"/>
    <lineage>
        <taxon>Bacteria</taxon>
        <taxon>Pseudomonadati</taxon>
        <taxon>Pseudomonadota</taxon>
        <taxon>Gammaproteobacteria</taxon>
        <taxon>Legionellales</taxon>
        <taxon>Coxiellaceae</taxon>
        <taxon>Coxiella</taxon>
    </lineage>
</organism>
<reference key="1">
    <citation type="submission" date="2007-11" db="EMBL/GenBank/DDBJ databases">
        <title>Genome sequencing of phylogenetically and phenotypically diverse Coxiella burnetii isolates.</title>
        <authorList>
            <person name="Seshadri R."/>
            <person name="Samuel J.E."/>
        </authorList>
    </citation>
    <scope>NUCLEOTIDE SEQUENCE [LARGE SCALE GENOMIC DNA]</scope>
    <source>
        <strain>RSA 331 / Henzerling II</strain>
    </source>
</reference>
<proteinExistence type="inferred from homology"/>
<dbReference type="EC" id="6.1.1.14" evidence="1"/>
<dbReference type="EMBL" id="CP000890">
    <property type="protein sequence ID" value="ABX77801.1"/>
    <property type="molecule type" value="Genomic_DNA"/>
</dbReference>
<dbReference type="RefSeq" id="WP_012220855.1">
    <property type="nucleotide sequence ID" value="NC_010117.1"/>
</dbReference>
<dbReference type="SMR" id="A9NB99"/>
<dbReference type="KEGG" id="cbs:COXBURSA331_A2116"/>
<dbReference type="HOGENOM" id="CLU_007220_2_2_6"/>
<dbReference type="GO" id="GO:0005829">
    <property type="term" value="C:cytosol"/>
    <property type="evidence" value="ECO:0007669"/>
    <property type="project" value="TreeGrafter"/>
</dbReference>
<dbReference type="GO" id="GO:0004814">
    <property type="term" value="F:arginine-tRNA ligase activity"/>
    <property type="evidence" value="ECO:0007669"/>
    <property type="project" value="InterPro"/>
</dbReference>
<dbReference type="GO" id="GO:0005524">
    <property type="term" value="F:ATP binding"/>
    <property type="evidence" value="ECO:0007669"/>
    <property type="project" value="UniProtKB-UniRule"/>
</dbReference>
<dbReference type="GO" id="GO:0004820">
    <property type="term" value="F:glycine-tRNA ligase activity"/>
    <property type="evidence" value="ECO:0007669"/>
    <property type="project" value="UniProtKB-UniRule"/>
</dbReference>
<dbReference type="GO" id="GO:0006420">
    <property type="term" value="P:arginyl-tRNA aminoacylation"/>
    <property type="evidence" value="ECO:0007669"/>
    <property type="project" value="InterPro"/>
</dbReference>
<dbReference type="GO" id="GO:0006426">
    <property type="term" value="P:glycyl-tRNA aminoacylation"/>
    <property type="evidence" value="ECO:0007669"/>
    <property type="project" value="UniProtKB-UniRule"/>
</dbReference>
<dbReference type="Gene3D" id="1.10.730.10">
    <property type="entry name" value="Isoleucyl-tRNA Synthetase, Domain 1"/>
    <property type="match status" value="1"/>
</dbReference>
<dbReference type="HAMAP" id="MF_00255">
    <property type="entry name" value="Gly_tRNA_synth_beta"/>
    <property type="match status" value="1"/>
</dbReference>
<dbReference type="InterPro" id="IPR008909">
    <property type="entry name" value="DALR_anticod-bd"/>
</dbReference>
<dbReference type="InterPro" id="IPR015944">
    <property type="entry name" value="Gly-tRNA-synth_bsu"/>
</dbReference>
<dbReference type="InterPro" id="IPR006194">
    <property type="entry name" value="Gly-tRNA-synth_heterodimer"/>
</dbReference>
<dbReference type="NCBIfam" id="TIGR00211">
    <property type="entry name" value="glyS"/>
    <property type="match status" value="1"/>
</dbReference>
<dbReference type="PANTHER" id="PTHR30075:SF2">
    <property type="entry name" value="GLYCINE--TRNA LIGASE, CHLOROPLASTIC_MITOCHONDRIAL 2"/>
    <property type="match status" value="1"/>
</dbReference>
<dbReference type="PANTHER" id="PTHR30075">
    <property type="entry name" value="GLYCYL-TRNA SYNTHETASE"/>
    <property type="match status" value="1"/>
</dbReference>
<dbReference type="Pfam" id="PF05746">
    <property type="entry name" value="DALR_1"/>
    <property type="match status" value="1"/>
</dbReference>
<dbReference type="Pfam" id="PF02092">
    <property type="entry name" value="tRNA_synt_2f"/>
    <property type="match status" value="1"/>
</dbReference>
<dbReference type="PRINTS" id="PR01045">
    <property type="entry name" value="TRNASYNTHGB"/>
</dbReference>
<dbReference type="SUPFAM" id="SSF109604">
    <property type="entry name" value="HD-domain/PDEase-like"/>
    <property type="match status" value="1"/>
</dbReference>
<dbReference type="PROSITE" id="PS50861">
    <property type="entry name" value="AA_TRNA_LIGASE_II_GLYAB"/>
    <property type="match status" value="1"/>
</dbReference>